<sequence>MSSKPLYTILTVFNPIFIYFTKRDNLHTLRFKKDRAIKISEELFPDELCERCGRCCILHAYKTEDGIKTIYCEHLDPETKLCKVYKDRFKHRCLTVMEGILAGVFPKDCPYVKNLKNYEEPWFYRHLRD</sequence>
<gene>
    <name type="ordered locus">MJ1479.1</name>
</gene>
<feature type="chain" id="PRO_0000107362" description="Uncharacterized protein MJ1479.1">
    <location>
        <begin position="1"/>
        <end position="129"/>
    </location>
</feature>
<keyword id="KW-1185">Reference proteome</keyword>
<name>YE7B_METJA</name>
<protein>
    <recommendedName>
        <fullName>Uncharacterized protein MJ1479.1</fullName>
    </recommendedName>
</protein>
<reference key="1">
    <citation type="journal article" date="1996" name="Science">
        <title>Complete genome sequence of the methanogenic archaeon, Methanococcus jannaschii.</title>
        <authorList>
            <person name="Bult C.J."/>
            <person name="White O."/>
            <person name="Olsen G.J."/>
            <person name="Zhou L."/>
            <person name="Fleischmann R.D."/>
            <person name="Sutton G.G."/>
            <person name="Blake J.A."/>
            <person name="FitzGerald L.M."/>
            <person name="Clayton R.A."/>
            <person name="Gocayne J.D."/>
            <person name="Kerlavage A.R."/>
            <person name="Dougherty B.A."/>
            <person name="Tomb J.-F."/>
            <person name="Adams M.D."/>
            <person name="Reich C.I."/>
            <person name="Overbeek R."/>
            <person name="Kirkness E.F."/>
            <person name="Weinstock K.G."/>
            <person name="Merrick J.M."/>
            <person name="Glodek A."/>
            <person name="Scott J.L."/>
            <person name="Geoghagen N.S.M."/>
            <person name="Weidman J.F."/>
            <person name="Fuhrmann J.L."/>
            <person name="Nguyen D."/>
            <person name="Utterback T.R."/>
            <person name="Kelley J.M."/>
            <person name="Peterson J.D."/>
            <person name="Sadow P.W."/>
            <person name="Hanna M.C."/>
            <person name="Cotton M.D."/>
            <person name="Roberts K.M."/>
            <person name="Hurst M.A."/>
            <person name="Kaine B.P."/>
            <person name="Borodovsky M."/>
            <person name="Klenk H.-P."/>
            <person name="Fraser C.M."/>
            <person name="Smith H.O."/>
            <person name="Woese C.R."/>
            <person name="Venter J.C."/>
        </authorList>
    </citation>
    <scope>NUCLEOTIDE SEQUENCE [LARGE SCALE GENOMIC DNA]</scope>
    <source>
        <strain>ATCC 43067 / DSM 2661 / JAL-1 / JCM 10045 / NBRC 100440</strain>
    </source>
</reference>
<organism>
    <name type="scientific">Methanocaldococcus jannaschii (strain ATCC 43067 / DSM 2661 / JAL-1 / JCM 10045 / NBRC 100440)</name>
    <name type="common">Methanococcus jannaschii</name>
    <dbReference type="NCBI Taxonomy" id="243232"/>
    <lineage>
        <taxon>Archaea</taxon>
        <taxon>Methanobacteriati</taxon>
        <taxon>Methanobacteriota</taxon>
        <taxon>Methanomada group</taxon>
        <taxon>Methanococci</taxon>
        <taxon>Methanococcales</taxon>
        <taxon>Methanocaldococcaceae</taxon>
        <taxon>Methanocaldococcus</taxon>
    </lineage>
</organism>
<accession>P81227</accession>
<dbReference type="EMBL" id="L77117">
    <property type="protein sequence ID" value="AAB99501.1"/>
    <property type="molecule type" value="Genomic_DNA"/>
</dbReference>
<dbReference type="STRING" id="243232.MJ_1479.1"/>
<dbReference type="PaxDb" id="243232-MJ_1479.1"/>
<dbReference type="EnsemblBacteria" id="AAB99501">
    <property type="protein sequence ID" value="AAB99501"/>
    <property type="gene ID" value="MJ_1479.1"/>
</dbReference>
<dbReference type="KEGG" id="mja:MJ_1479.1"/>
<dbReference type="eggNOG" id="arCOG05086">
    <property type="taxonomic scope" value="Archaea"/>
</dbReference>
<dbReference type="HOGENOM" id="CLU_2243898_0_0_2"/>
<dbReference type="InParanoid" id="P81227"/>
<dbReference type="Proteomes" id="UP000000805">
    <property type="component" value="Chromosome"/>
</dbReference>
<proteinExistence type="predicted"/>